<accession>Q9Z1P7</accession>
<reference key="1">
    <citation type="journal article" date="2005" name="Science">
        <title>The transcriptional landscape of the mammalian genome.</title>
        <authorList>
            <person name="Carninci P."/>
            <person name="Kasukawa T."/>
            <person name="Katayama S."/>
            <person name="Gough J."/>
            <person name="Frith M.C."/>
            <person name="Maeda N."/>
            <person name="Oyama R."/>
            <person name="Ravasi T."/>
            <person name="Lenhard B."/>
            <person name="Wells C."/>
            <person name="Kodzius R."/>
            <person name="Shimokawa K."/>
            <person name="Bajic V.B."/>
            <person name="Brenner S.E."/>
            <person name="Batalov S."/>
            <person name="Forrest A.R."/>
            <person name="Zavolan M."/>
            <person name="Davis M.J."/>
            <person name="Wilming L.G."/>
            <person name="Aidinis V."/>
            <person name="Allen J.E."/>
            <person name="Ambesi-Impiombato A."/>
            <person name="Apweiler R."/>
            <person name="Aturaliya R.N."/>
            <person name="Bailey T.L."/>
            <person name="Bansal M."/>
            <person name="Baxter L."/>
            <person name="Beisel K.W."/>
            <person name="Bersano T."/>
            <person name="Bono H."/>
            <person name="Chalk A.M."/>
            <person name="Chiu K.P."/>
            <person name="Choudhary V."/>
            <person name="Christoffels A."/>
            <person name="Clutterbuck D.R."/>
            <person name="Crowe M.L."/>
            <person name="Dalla E."/>
            <person name="Dalrymple B.P."/>
            <person name="de Bono B."/>
            <person name="Della Gatta G."/>
            <person name="di Bernardo D."/>
            <person name="Down T."/>
            <person name="Engstrom P."/>
            <person name="Fagiolini M."/>
            <person name="Faulkner G."/>
            <person name="Fletcher C.F."/>
            <person name="Fukushima T."/>
            <person name="Furuno M."/>
            <person name="Futaki S."/>
            <person name="Gariboldi M."/>
            <person name="Georgii-Hemming P."/>
            <person name="Gingeras T.R."/>
            <person name="Gojobori T."/>
            <person name="Green R.E."/>
            <person name="Gustincich S."/>
            <person name="Harbers M."/>
            <person name="Hayashi Y."/>
            <person name="Hensch T.K."/>
            <person name="Hirokawa N."/>
            <person name="Hill D."/>
            <person name="Huminiecki L."/>
            <person name="Iacono M."/>
            <person name="Ikeo K."/>
            <person name="Iwama A."/>
            <person name="Ishikawa T."/>
            <person name="Jakt M."/>
            <person name="Kanapin A."/>
            <person name="Katoh M."/>
            <person name="Kawasawa Y."/>
            <person name="Kelso J."/>
            <person name="Kitamura H."/>
            <person name="Kitano H."/>
            <person name="Kollias G."/>
            <person name="Krishnan S.P."/>
            <person name="Kruger A."/>
            <person name="Kummerfeld S.K."/>
            <person name="Kurochkin I.V."/>
            <person name="Lareau L.F."/>
            <person name="Lazarevic D."/>
            <person name="Lipovich L."/>
            <person name="Liu J."/>
            <person name="Liuni S."/>
            <person name="McWilliam S."/>
            <person name="Madan Babu M."/>
            <person name="Madera M."/>
            <person name="Marchionni L."/>
            <person name="Matsuda H."/>
            <person name="Matsuzawa S."/>
            <person name="Miki H."/>
            <person name="Mignone F."/>
            <person name="Miyake S."/>
            <person name="Morris K."/>
            <person name="Mottagui-Tabar S."/>
            <person name="Mulder N."/>
            <person name="Nakano N."/>
            <person name="Nakauchi H."/>
            <person name="Ng P."/>
            <person name="Nilsson R."/>
            <person name="Nishiguchi S."/>
            <person name="Nishikawa S."/>
            <person name="Nori F."/>
            <person name="Ohara O."/>
            <person name="Okazaki Y."/>
            <person name="Orlando V."/>
            <person name="Pang K.C."/>
            <person name="Pavan W.J."/>
            <person name="Pavesi G."/>
            <person name="Pesole G."/>
            <person name="Petrovsky N."/>
            <person name="Piazza S."/>
            <person name="Reed J."/>
            <person name="Reid J.F."/>
            <person name="Ring B.Z."/>
            <person name="Ringwald M."/>
            <person name="Rost B."/>
            <person name="Ruan Y."/>
            <person name="Salzberg S.L."/>
            <person name="Sandelin A."/>
            <person name="Schneider C."/>
            <person name="Schoenbach C."/>
            <person name="Sekiguchi K."/>
            <person name="Semple C.A."/>
            <person name="Seno S."/>
            <person name="Sessa L."/>
            <person name="Sheng Y."/>
            <person name="Shibata Y."/>
            <person name="Shimada H."/>
            <person name="Shimada K."/>
            <person name="Silva D."/>
            <person name="Sinclair B."/>
            <person name="Sperling S."/>
            <person name="Stupka E."/>
            <person name="Sugiura K."/>
            <person name="Sultana R."/>
            <person name="Takenaka Y."/>
            <person name="Taki K."/>
            <person name="Tammoja K."/>
            <person name="Tan S.L."/>
            <person name="Tang S."/>
            <person name="Taylor M.S."/>
            <person name="Tegner J."/>
            <person name="Teichmann S.A."/>
            <person name="Ueda H.R."/>
            <person name="van Nimwegen E."/>
            <person name="Verardo R."/>
            <person name="Wei C.L."/>
            <person name="Yagi K."/>
            <person name="Yamanishi H."/>
            <person name="Zabarovsky E."/>
            <person name="Zhu S."/>
            <person name="Zimmer A."/>
            <person name="Hide W."/>
            <person name="Bult C."/>
            <person name="Grimmond S.M."/>
            <person name="Teasdale R.D."/>
            <person name="Liu E.T."/>
            <person name="Brusic V."/>
            <person name="Quackenbush J."/>
            <person name="Wahlestedt C."/>
            <person name="Mattick J.S."/>
            <person name="Hume D.A."/>
            <person name="Kai C."/>
            <person name="Sasaki D."/>
            <person name="Tomaru Y."/>
            <person name="Fukuda S."/>
            <person name="Kanamori-Katayama M."/>
            <person name="Suzuki M."/>
            <person name="Aoki J."/>
            <person name="Arakawa T."/>
            <person name="Iida J."/>
            <person name="Imamura K."/>
            <person name="Itoh M."/>
            <person name="Kato T."/>
            <person name="Kawaji H."/>
            <person name="Kawagashira N."/>
            <person name="Kawashima T."/>
            <person name="Kojima M."/>
            <person name="Kondo S."/>
            <person name="Konno H."/>
            <person name="Nakano K."/>
            <person name="Ninomiya N."/>
            <person name="Nishio T."/>
            <person name="Okada M."/>
            <person name="Plessy C."/>
            <person name="Shibata K."/>
            <person name="Shiraki T."/>
            <person name="Suzuki S."/>
            <person name="Tagami M."/>
            <person name="Waki K."/>
            <person name="Watahiki A."/>
            <person name="Okamura-Oho Y."/>
            <person name="Suzuki H."/>
            <person name="Kawai J."/>
            <person name="Hayashizaki Y."/>
        </authorList>
    </citation>
    <scope>NUCLEOTIDE SEQUENCE [LARGE SCALE MRNA]</scope>
    <source>
        <strain>C57BL/6J</strain>
        <tissue>Kidney</tissue>
    </source>
</reference>
<reference key="2">
    <citation type="journal article" date="2003" name="Genome Res.">
        <title>Analysis of the gene-dense major histocompatibility complex class III region and its comparison to mouse.</title>
        <authorList>
            <person name="Xie T."/>
            <person name="Rowen L."/>
            <person name="Aguado B."/>
            <person name="Ahearn M.E."/>
            <person name="Madan A."/>
            <person name="Qin S."/>
            <person name="Campbell R.D."/>
            <person name="Hood L."/>
        </authorList>
    </citation>
    <scope>NUCLEOTIDE SEQUENCE [LARGE SCALE GENOMIC DNA]</scope>
    <source>
        <strain>129</strain>
    </source>
</reference>
<reference key="3">
    <citation type="journal article" date="2004" name="Mamm. Genome">
        <title>Gene content of the 750-kb critical region for mouse embryonic ectoderm lethal tcl-w5.</title>
        <authorList>
            <person name="Abe K."/>
            <person name="Yuzuriha M."/>
            <person name="Sugimoto M."/>
            <person name="Ko M.S."/>
            <person name="Brathwaite M.E."/>
            <person name="Waeltz P."/>
            <person name="Nagaraja R."/>
        </authorList>
    </citation>
    <scope>NUCLEOTIDE SEQUENCE [LARGE SCALE GENOMIC DNA]</scope>
    <source>
        <strain>129/Sv</strain>
    </source>
</reference>
<reference key="4">
    <citation type="journal article" date="2010" name="Cell">
        <title>A tissue-specific atlas of mouse protein phosphorylation and expression.</title>
        <authorList>
            <person name="Huttlin E.L."/>
            <person name="Jedrychowski M.P."/>
            <person name="Elias J.E."/>
            <person name="Goswami T."/>
            <person name="Rad R."/>
            <person name="Beausoleil S.A."/>
            <person name="Villen J."/>
            <person name="Haas W."/>
            <person name="Sowa M.E."/>
            <person name="Gygi S.P."/>
        </authorList>
    </citation>
    <scope>PHOSPHORYLATION [LARGE SCALE ANALYSIS] AT SER-159; SER-163; SER-167; SER-176 AND SER-279</scope>
    <scope>IDENTIFICATION BY MASS SPECTROMETRY [LARGE SCALE ANALYSIS]</scope>
    <source>
        <tissue>Brain</tissue>
        <tissue>Brown adipose tissue</tissue>
        <tissue>Heart</tissue>
        <tissue>Kidney</tissue>
        <tissue>Liver</tissue>
        <tissue>Lung</tissue>
        <tissue>Spleen</tissue>
        <tissue>Testis</tissue>
    </source>
</reference>
<feature type="chain" id="PRO_0000244583" description="KN motif and ankyrin repeat domain-containing protein 3">
    <location>
        <begin position="1"/>
        <end position="791"/>
    </location>
</feature>
<feature type="repeat" description="ANK 1">
    <location>
        <begin position="606"/>
        <end position="636"/>
    </location>
</feature>
<feature type="repeat" description="ANK 2">
    <location>
        <begin position="640"/>
        <end position="677"/>
    </location>
</feature>
<feature type="repeat" description="ANK 3">
    <location>
        <begin position="679"/>
        <end position="708"/>
    </location>
</feature>
<feature type="repeat" description="ANK 4">
    <location>
        <begin position="712"/>
        <end position="742"/>
    </location>
</feature>
<feature type="repeat" description="ANK 5">
    <location>
        <begin position="746"/>
        <end position="775"/>
    </location>
</feature>
<feature type="region of interest" description="Disordered" evidence="3">
    <location>
        <begin position="1"/>
        <end position="37"/>
    </location>
</feature>
<feature type="region of interest" description="Disordered" evidence="3">
    <location>
        <begin position="56"/>
        <end position="181"/>
    </location>
</feature>
<feature type="region of interest" description="Disordered" evidence="3">
    <location>
        <begin position="254"/>
        <end position="312"/>
    </location>
</feature>
<feature type="region of interest" description="Disordered" evidence="3">
    <location>
        <begin position="401"/>
        <end position="425"/>
    </location>
</feature>
<feature type="region of interest" description="Disordered" evidence="3">
    <location>
        <begin position="463"/>
        <end position="514"/>
    </location>
</feature>
<feature type="region of interest" description="Disordered" evidence="3">
    <location>
        <begin position="772"/>
        <end position="791"/>
    </location>
</feature>
<feature type="coiled-coil region" evidence="2">
    <location>
        <begin position="180"/>
        <end position="229"/>
    </location>
</feature>
<feature type="compositionally biased region" description="Polar residues" evidence="3">
    <location>
        <begin position="25"/>
        <end position="34"/>
    </location>
</feature>
<feature type="compositionally biased region" description="Low complexity" evidence="3">
    <location>
        <begin position="105"/>
        <end position="125"/>
    </location>
</feature>
<feature type="compositionally biased region" description="Basic and acidic residues" evidence="3">
    <location>
        <begin position="127"/>
        <end position="149"/>
    </location>
</feature>
<feature type="compositionally biased region" description="Low complexity" evidence="3">
    <location>
        <begin position="158"/>
        <end position="180"/>
    </location>
</feature>
<feature type="compositionally biased region" description="Basic and acidic residues" evidence="3">
    <location>
        <begin position="254"/>
        <end position="280"/>
    </location>
</feature>
<feature type="compositionally biased region" description="Basic and acidic residues" evidence="3">
    <location>
        <begin position="293"/>
        <end position="312"/>
    </location>
</feature>
<feature type="compositionally biased region" description="Polar residues" evidence="3">
    <location>
        <begin position="401"/>
        <end position="410"/>
    </location>
</feature>
<feature type="compositionally biased region" description="Low complexity" evidence="3">
    <location>
        <begin position="485"/>
        <end position="496"/>
    </location>
</feature>
<feature type="compositionally biased region" description="Basic and acidic residues" evidence="3">
    <location>
        <begin position="505"/>
        <end position="514"/>
    </location>
</feature>
<feature type="compositionally biased region" description="Polar residues" evidence="3">
    <location>
        <begin position="772"/>
        <end position="783"/>
    </location>
</feature>
<feature type="modified residue" description="Phosphoserine" evidence="1">
    <location>
        <position position="151"/>
    </location>
</feature>
<feature type="modified residue" description="Phosphoserine" evidence="6">
    <location>
        <position position="159"/>
    </location>
</feature>
<feature type="modified residue" description="Phosphoserine" evidence="6">
    <location>
        <position position="163"/>
    </location>
</feature>
<feature type="modified residue" description="Phosphoserine" evidence="1">
    <location>
        <position position="166"/>
    </location>
</feature>
<feature type="modified residue" description="Phosphoserine" evidence="6">
    <location>
        <position position="167"/>
    </location>
</feature>
<feature type="modified residue" description="Phosphoserine" evidence="6">
    <location>
        <position position="176"/>
    </location>
</feature>
<feature type="modified residue" description="Phosphoserine" evidence="6">
    <location>
        <position position="279"/>
    </location>
</feature>
<feature type="helix" evidence="7">
    <location>
        <begin position="533"/>
        <end position="546"/>
    </location>
</feature>
<feature type="helix" evidence="7">
    <location>
        <begin position="558"/>
        <end position="571"/>
    </location>
</feature>
<feature type="helix" evidence="7">
    <location>
        <begin position="578"/>
        <end position="591"/>
    </location>
</feature>
<feature type="helix" evidence="7">
    <location>
        <begin position="593"/>
        <end position="600"/>
    </location>
</feature>
<feature type="helix" evidence="7">
    <location>
        <begin position="610"/>
        <end position="617"/>
    </location>
</feature>
<feature type="helix" evidence="7">
    <location>
        <begin position="620"/>
        <end position="628"/>
    </location>
</feature>
<feature type="helix" evidence="7">
    <location>
        <begin position="644"/>
        <end position="650"/>
    </location>
</feature>
<feature type="helix" evidence="7">
    <location>
        <begin position="657"/>
        <end position="669"/>
    </location>
</feature>
<feature type="turn" evidence="7">
    <location>
        <begin position="677"/>
        <end position="679"/>
    </location>
</feature>
<feature type="helix" evidence="7">
    <location>
        <begin position="683"/>
        <end position="689"/>
    </location>
</feature>
<feature type="helix" evidence="7">
    <location>
        <begin position="693"/>
        <end position="701"/>
    </location>
</feature>
<feature type="helix" evidence="7">
    <location>
        <begin position="716"/>
        <end position="723"/>
    </location>
</feature>
<feature type="helix" evidence="7">
    <location>
        <begin position="726"/>
        <end position="733"/>
    </location>
</feature>
<feature type="helix" evidence="7">
    <location>
        <begin position="750"/>
        <end position="756"/>
    </location>
</feature>
<feature type="helix" evidence="7">
    <location>
        <begin position="760"/>
        <end position="769"/>
    </location>
</feature>
<keyword id="KW-0002">3D-structure</keyword>
<keyword id="KW-0040">ANK repeat</keyword>
<keyword id="KW-0175">Coiled coil</keyword>
<keyword id="KW-0597">Phosphoprotein</keyword>
<keyword id="KW-1185">Reference proteome</keyword>
<keyword id="KW-0677">Repeat</keyword>
<sequence>MAKFVLNQNLPDLGGPPLYPGPTGSARSPSSPYSVETPYGFHLDLDFLKYVEEIERGPASRRTPGPPHARRPRASRTGLAGARSPGAWTSSESLASDDGGASGALSPGAFPGLSLPPLSPRSLSRNPRVEHTLLETSRRLEQAQARERALSPARAVTRSPRGSGRSSPAPNPALASPGPAQLQLVREQMAAALRRLRELEDQARALPELQEQVRALRAEKARLLAGRVQPEQEVEIEARPDKLAQLRRLTERLATSDRGVRSRASPRAEDPDGLAARRSEGALQVLDPGSRTPDGEPRTRETGTEVVPETREVDAQAVPETGEAGVEVVPETVEVDTWVTEELLGLPEAAERELELLRTSLEHQRGVSELLRGRLRELEEAHEAAVTRPQSRDVAAQTTLGCTEKTTQTELPVENQPRPTAGDEMAPVGILKSIMKKKDGIPGAQSSQGPKSLQFVGVLNGEYESSSSEDGNSDDEDGVAEHPRSSSSGSDDSSGGSDAGTPGPHNDKDAGDCELETHPELTAGREGRCELNPRLREACIALNQQLNRPRGVTSRDGNAARLVAQEWFRVSSQKRSQAESVAGVLRGVKSLGPELLAYVVNLADGNGNTALHYSVSHGNLAISSLLLDTGVCDVNHQNRAGYSALMLAALTSVGQEEEDMAVAQRLFSMGDVNAKASQTGQTALMLAISHGHQDMVAALLECGADVNVQDADGATALMCASEYGRLDTVQLLLAQPGCDLTILDNEGTSALAIALEAEQDEVAALLHAHLTSNHQGQSSTGSPTAKECNDK</sequence>
<dbReference type="EMBL" id="AK002623">
    <property type="protein sequence ID" value="BAB22238.1"/>
    <property type="molecule type" value="mRNA"/>
</dbReference>
<dbReference type="EMBL" id="AF110520">
    <property type="protein sequence ID" value="AAC97966.1"/>
    <property type="molecule type" value="Genomic_DNA"/>
</dbReference>
<dbReference type="EMBL" id="AF528162">
    <property type="protein sequence ID" value="AAO17376.1"/>
    <property type="molecule type" value="Genomic_DNA"/>
</dbReference>
<dbReference type="CCDS" id="CCDS28630.1"/>
<dbReference type="RefSeq" id="NP_109622.1">
    <property type="nucleotide sequence ID" value="NM_030697.3"/>
</dbReference>
<dbReference type="PDB" id="6TLH">
    <property type="method" value="X-ray"/>
    <property type="resolution" value="1.80 A"/>
    <property type="chains" value="A/B=524-773"/>
</dbReference>
<dbReference type="PDBsum" id="6TLH"/>
<dbReference type="SMR" id="Q9Z1P7"/>
<dbReference type="FunCoup" id="Q9Z1P7">
    <property type="interactions" value="103"/>
</dbReference>
<dbReference type="IntAct" id="Q9Z1P7">
    <property type="interactions" value="1"/>
</dbReference>
<dbReference type="STRING" id="10090.ENSMUSP00000040126"/>
<dbReference type="GlyGen" id="Q9Z1P7">
    <property type="glycosylation" value="4 sites"/>
</dbReference>
<dbReference type="iPTMnet" id="Q9Z1P7"/>
<dbReference type="PhosphoSitePlus" id="Q9Z1P7"/>
<dbReference type="PaxDb" id="10090-ENSMUSP00000040126"/>
<dbReference type="PeptideAtlas" id="Q9Z1P7"/>
<dbReference type="ProteomicsDB" id="269173"/>
<dbReference type="Antibodypedia" id="42728">
    <property type="antibodies" value="53 antibodies from 17 providers"/>
</dbReference>
<dbReference type="DNASU" id="80880"/>
<dbReference type="Ensembl" id="ENSMUST00000048560.11">
    <property type="protein sequence ID" value="ENSMUSP00000040126.5"/>
    <property type="gene ID" value="ENSMUSG00000042099.17"/>
</dbReference>
<dbReference type="GeneID" id="80880"/>
<dbReference type="KEGG" id="mmu:80880"/>
<dbReference type="UCSC" id="uc008bzq.1">
    <property type="organism name" value="mouse"/>
</dbReference>
<dbReference type="AGR" id="MGI:1098615"/>
<dbReference type="CTD" id="256949"/>
<dbReference type="MGI" id="MGI:1098615">
    <property type="gene designation" value="Kank3"/>
</dbReference>
<dbReference type="VEuPathDB" id="HostDB:ENSMUSG00000042099"/>
<dbReference type="eggNOG" id="KOG0514">
    <property type="taxonomic scope" value="Eukaryota"/>
</dbReference>
<dbReference type="GeneTree" id="ENSGT00940000161178"/>
<dbReference type="HOGENOM" id="CLU_004269_2_0_1"/>
<dbReference type="InParanoid" id="Q9Z1P7"/>
<dbReference type="OMA" id="SDAWVTE"/>
<dbReference type="OrthoDB" id="5406014at2759"/>
<dbReference type="PhylomeDB" id="Q9Z1P7"/>
<dbReference type="TreeFam" id="TF324499"/>
<dbReference type="BioGRID-ORCS" id="80880">
    <property type="hits" value="9 hits in 78 CRISPR screens"/>
</dbReference>
<dbReference type="ChiTaRS" id="Kank3">
    <property type="organism name" value="mouse"/>
</dbReference>
<dbReference type="PRO" id="PR:Q9Z1P7"/>
<dbReference type="Proteomes" id="UP000000589">
    <property type="component" value="Chromosome 17"/>
</dbReference>
<dbReference type="RNAct" id="Q9Z1P7">
    <property type="molecule type" value="protein"/>
</dbReference>
<dbReference type="Bgee" id="ENSMUSG00000042099">
    <property type="expression patterns" value="Expressed in brain blood vessel and 236 other cell types or tissues"/>
</dbReference>
<dbReference type="ExpressionAtlas" id="Q9Z1P7">
    <property type="expression patterns" value="baseline and differential"/>
</dbReference>
<dbReference type="GO" id="GO:0005737">
    <property type="term" value="C:cytoplasm"/>
    <property type="evidence" value="ECO:0000266"/>
    <property type="project" value="MGI"/>
</dbReference>
<dbReference type="GO" id="GO:0030837">
    <property type="term" value="P:negative regulation of actin filament polymerization"/>
    <property type="evidence" value="ECO:0007669"/>
    <property type="project" value="InterPro"/>
</dbReference>
<dbReference type="GO" id="GO:0051497">
    <property type="term" value="P:negative regulation of stress fiber assembly"/>
    <property type="evidence" value="ECO:0000266"/>
    <property type="project" value="MGI"/>
</dbReference>
<dbReference type="FunFam" id="1.25.40.20:FF:000017">
    <property type="entry name" value="KN motif and ankyrin repeat domain-containing protein 1"/>
    <property type="match status" value="1"/>
</dbReference>
<dbReference type="Gene3D" id="1.25.40.20">
    <property type="entry name" value="Ankyrin repeat-containing domain"/>
    <property type="match status" value="1"/>
</dbReference>
<dbReference type="InterPro" id="IPR002110">
    <property type="entry name" value="Ankyrin_rpt"/>
</dbReference>
<dbReference type="InterPro" id="IPR036770">
    <property type="entry name" value="Ankyrin_rpt-contain_sf"/>
</dbReference>
<dbReference type="InterPro" id="IPR047184">
    <property type="entry name" value="KANK1-4"/>
</dbReference>
<dbReference type="InterPro" id="IPR021939">
    <property type="entry name" value="KN_motif"/>
</dbReference>
<dbReference type="PANTHER" id="PTHR24168">
    <property type="entry name" value="KN MOTIF AND ANKYRIN REPEAT DOMAIN-CONTAINING"/>
    <property type="match status" value="1"/>
</dbReference>
<dbReference type="PANTHER" id="PTHR24168:SF23">
    <property type="entry name" value="KN MOTIF AND ANKYRIN REPEAT DOMAIN-CONTAINING PROTEIN 3"/>
    <property type="match status" value="1"/>
</dbReference>
<dbReference type="Pfam" id="PF12796">
    <property type="entry name" value="Ank_2"/>
    <property type="match status" value="2"/>
</dbReference>
<dbReference type="Pfam" id="PF12075">
    <property type="entry name" value="KN_motif"/>
    <property type="match status" value="1"/>
</dbReference>
<dbReference type="PRINTS" id="PR01415">
    <property type="entry name" value="ANKYRIN"/>
</dbReference>
<dbReference type="SMART" id="SM00248">
    <property type="entry name" value="ANK"/>
    <property type="match status" value="4"/>
</dbReference>
<dbReference type="SUPFAM" id="SSF48403">
    <property type="entry name" value="Ankyrin repeat"/>
    <property type="match status" value="1"/>
</dbReference>
<dbReference type="PROSITE" id="PS50297">
    <property type="entry name" value="ANK_REP_REGION"/>
    <property type="match status" value="1"/>
</dbReference>
<dbReference type="PROSITE" id="PS50088">
    <property type="entry name" value="ANK_REPEAT"/>
    <property type="match status" value="3"/>
</dbReference>
<name>KANK3_MOUSE</name>
<evidence type="ECO:0000250" key="1">
    <source>
        <dbReference type="UniProtKB" id="Q6NY19"/>
    </source>
</evidence>
<evidence type="ECO:0000255" key="2"/>
<evidence type="ECO:0000256" key="3">
    <source>
        <dbReference type="SAM" id="MobiDB-lite"/>
    </source>
</evidence>
<evidence type="ECO:0000305" key="4"/>
<evidence type="ECO:0000312" key="5">
    <source>
        <dbReference type="MGI" id="MGI:1098615"/>
    </source>
</evidence>
<evidence type="ECO:0007744" key="6">
    <source>
    </source>
</evidence>
<evidence type="ECO:0007829" key="7">
    <source>
        <dbReference type="PDB" id="6TLH"/>
    </source>
</evidence>
<proteinExistence type="evidence at protein level"/>
<protein>
    <recommendedName>
        <fullName evidence="4">KN motif and ankyrin repeat domain-containing protein 3</fullName>
    </recommendedName>
    <alternativeName>
        <fullName>Ankyrin repeat domain-containing protein 47</fullName>
    </alternativeName>
</protein>
<comment type="function">
    <text>May be involved in the control of cytoskeleton formation by regulating actin polymerization.</text>
</comment>
<gene>
    <name evidence="5" type="primary">Kank3</name>
    <name type="synonym">Ankrd47</name>
    <name type="synonym">D17Ertd288e</name>
    <name type="synonym">Ng28</name>
</gene>
<organism>
    <name type="scientific">Mus musculus</name>
    <name type="common">Mouse</name>
    <dbReference type="NCBI Taxonomy" id="10090"/>
    <lineage>
        <taxon>Eukaryota</taxon>
        <taxon>Metazoa</taxon>
        <taxon>Chordata</taxon>
        <taxon>Craniata</taxon>
        <taxon>Vertebrata</taxon>
        <taxon>Euteleostomi</taxon>
        <taxon>Mammalia</taxon>
        <taxon>Eutheria</taxon>
        <taxon>Euarchontoglires</taxon>
        <taxon>Glires</taxon>
        <taxon>Rodentia</taxon>
        <taxon>Myomorpha</taxon>
        <taxon>Muroidea</taxon>
        <taxon>Muridae</taxon>
        <taxon>Murinae</taxon>
        <taxon>Mus</taxon>
        <taxon>Mus</taxon>
    </lineage>
</organism>